<feature type="chain" id="PRO_0000267014" description="Enolase">
    <location>
        <begin position="1"/>
        <end position="424"/>
    </location>
</feature>
<feature type="active site" description="Proton donor" evidence="1">
    <location>
        <position position="207"/>
    </location>
</feature>
<feature type="active site" description="Proton acceptor" evidence="1">
    <location>
        <position position="335"/>
    </location>
</feature>
<feature type="binding site" evidence="1">
    <location>
        <position position="165"/>
    </location>
    <ligand>
        <name>(2R)-2-phosphoglycerate</name>
        <dbReference type="ChEBI" id="CHEBI:58289"/>
    </ligand>
</feature>
<feature type="binding site" evidence="1">
    <location>
        <position position="244"/>
    </location>
    <ligand>
        <name>Mg(2+)</name>
        <dbReference type="ChEBI" id="CHEBI:18420"/>
    </ligand>
</feature>
<feature type="binding site" evidence="1">
    <location>
        <position position="283"/>
    </location>
    <ligand>
        <name>Mg(2+)</name>
        <dbReference type="ChEBI" id="CHEBI:18420"/>
    </ligand>
</feature>
<feature type="binding site" evidence="1">
    <location>
        <position position="310"/>
    </location>
    <ligand>
        <name>Mg(2+)</name>
        <dbReference type="ChEBI" id="CHEBI:18420"/>
    </ligand>
</feature>
<feature type="binding site" evidence="1">
    <location>
        <position position="335"/>
    </location>
    <ligand>
        <name>(2R)-2-phosphoglycerate</name>
        <dbReference type="ChEBI" id="CHEBI:58289"/>
    </ligand>
</feature>
<feature type="binding site" evidence="1">
    <location>
        <position position="364"/>
    </location>
    <ligand>
        <name>(2R)-2-phosphoglycerate</name>
        <dbReference type="ChEBI" id="CHEBI:58289"/>
    </ligand>
</feature>
<feature type="binding site" evidence="1">
    <location>
        <position position="365"/>
    </location>
    <ligand>
        <name>(2R)-2-phosphoglycerate</name>
        <dbReference type="ChEBI" id="CHEBI:58289"/>
    </ligand>
</feature>
<feature type="binding site" evidence="1">
    <location>
        <position position="386"/>
    </location>
    <ligand>
        <name>(2R)-2-phosphoglycerate</name>
        <dbReference type="ChEBI" id="CHEBI:58289"/>
    </ligand>
</feature>
<protein>
    <recommendedName>
        <fullName evidence="1">Enolase</fullName>
        <ecNumber evidence="1">4.2.1.11</ecNumber>
    </recommendedName>
    <alternativeName>
        <fullName evidence="1">2-phospho-D-glycerate hydro-lyase</fullName>
    </alternativeName>
    <alternativeName>
        <fullName evidence="1">2-phosphoglycerate dehydratase</fullName>
    </alternativeName>
</protein>
<proteinExistence type="inferred from homology"/>
<evidence type="ECO:0000255" key="1">
    <source>
        <dbReference type="HAMAP-Rule" id="MF_00318"/>
    </source>
</evidence>
<organism>
    <name type="scientific">Chlamydia abortus (strain DSM 27085 / S26/3)</name>
    <name type="common">Chlamydophila abortus</name>
    <dbReference type="NCBI Taxonomy" id="218497"/>
    <lineage>
        <taxon>Bacteria</taxon>
        <taxon>Pseudomonadati</taxon>
        <taxon>Chlamydiota</taxon>
        <taxon>Chlamydiia</taxon>
        <taxon>Chlamydiales</taxon>
        <taxon>Chlamydiaceae</taxon>
        <taxon>Chlamydia/Chlamydophila group</taxon>
        <taxon>Chlamydia</taxon>
    </lineage>
</organism>
<name>ENO_CHLAB</name>
<keyword id="KW-0963">Cytoplasm</keyword>
<keyword id="KW-0324">Glycolysis</keyword>
<keyword id="KW-0456">Lyase</keyword>
<keyword id="KW-0460">Magnesium</keyword>
<keyword id="KW-0479">Metal-binding</keyword>
<keyword id="KW-0964">Secreted</keyword>
<reference key="1">
    <citation type="journal article" date="2005" name="Genome Res.">
        <title>The Chlamydophila abortus genome sequence reveals an array of variable proteins that contribute to interspecies variation.</title>
        <authorList>
            <person name="Thomson N.R."/>
            <person name="Yeats C."/>
            <person name="Bell K."/>
            <person name="Holden M.T.G."/>
            <person name="Bentley S.D."/>
            <person name="Livingstone M."/>
            <person name="Cerdeno-Tarraga A.-M."/>
            <person name="Harris B."/>
            <person name="Doggett J."/>
            <person name="Ormond D."/>
            <person name="Mungall K."/>
            <person name="Clarke K."/>
            <person name="Feltwell T."/>
            <person name="Hance Z."/>
            <person name="Sanders M."/>
            <person name="Quail M.A."/>
            <person name="Price C."/>
            <person name="Barrell B.G."/>
            <person name="Parkhill J."/>
            <person name="Longbottom D."/>
        </authorList>
    </citation>
    <scope>NUCLEOTIDE SEQUENCE [LARGE SCALE GENOMIC DNA]</scope>
    <source>
        <strain>DSM 27085 / S26/3</strain>
    </source>
</reference>
<accession>Q5L4S5</accession>
<comment type="function">
    <text evidence="1">Catalyzes the reversible conversion of 2-phosphoglycerate (2-PG) into phosphoenolpyruvate (PEP). It is essential for the degradation of carbohydrates via glycolysis.</text>
</comment>
<comment type="catalytic activity">
    <reaction evidence="1">
        <text>(2R)-2-phosphoglycerate = phosphoenolpyruvate + H2O</text>
        <dbReference type="Rhea" id="RHEA:10164"/>
        <dbReference type="ChEBI" id="CHEBI:15377"/>
        <dbReference type="ChEBI" id="CHEBI:58289"/>
        <dbReference type="ChEBI" id="CHEBI:58702"/>
        <dbReference type="EC" id="4.2.1.11"/>
    </reaction>
</comment>
<comment type="cofactor">
    <cofactor evidence="1">
        <name>Mg(2+)</name>
        <dbReference type="ChEBI" id="CHEBI:18420"/>
    </cofactor>
    <text evidence="1">Binds a second Mg(2+) ion via substrate during catalysis.</text>
</comment>
<comment type="pathway">
    <text evidence="1">Carbohydrate degradation; glycolysis; pyruvate from D-glyceraldehyde 3-phosphate: step 4/5.</text>
</comment>
<comment type="subcellular location">
    <subcellularLocation>
        <location evidence="1">Cytoplasm</location>
    </subcellularLocation>
    <subcellularLocation>
        <location evidence="1">Secreted</location>
    </subcellularLocation>
    <subcellularLocation>
        <location evidence="1">Cell surface</location>
    </subcellularLocation>
    <text evidence="1">Fractions of enolase are present in both the cytoplasm and on the cell surface.</text>
</comment>
<comment type="similarity">
    <text evidence="1">Belongs to the enolase family.</text>
</comment>
<gene>
    <name evidence="1" type="primary">eno</name>
    <name type="ordered locus">CAB932</name>
</gene>
<dbReference type="EC" id="4.2.1.11" evidence="1"/>
<dbReference type="EMBL" id="CR848038">
    <property type="protein sequence ID" value="CAH64371.1"/>
    <property type="molecule type" value="Genomic_DNA"/>
</dbReference>
<dbReference type="RefSeq" id="WP_011097432.1">
    <property type="nucleotide sequence ID" value="NC_004552.2"/>
</dbReference>
<dbReference type="SMR" id="Q5L4S5"/>
<dbReference type="GeneID" id="93024488"/>
<dbReference type="KEGG" id="cab:CAB932"/>
<dbReference type="eggNOG" id="COG0148">
    <property type="taxonomic scope" value="Bacteria"/>
</dbReference>
<dbReference type="HOGENOM" id="CLU_031223_2_1_0"/>
<dbReference type="OrthoDB" id="9804716at2"/>
<dbReference type="UniPathway" id="UPA00109">
    <property type="reaction ID" value="UER00187"/>
</dbReference>
<dbReference type="Proteomes" id="UP000001012">
    <property type="component" value="Chromosome"/>
</dbReference>
<dbReference type="GO" id="GO:0009986">
    <property type="term" value="C:cell surface"/>
    <property type="evidence" value="ECO:0007669"/>
    <property type="project" value="UniProtKB-SubCell"/>
</dbReference>
<dbReference type="GO" id="GO:0005576">
    <property type="term" value="C:extracellular region"/>
    <property type="evidence" value="ECO:0007669"/>
    <property type="project" value="UniProtKB-SubCell"/>
</dbReference>
<dbReference type="GO" id="GO:0000015">
    <property type="term" value="C:phosphopyruvate hydratase complex"/>
    <property type="evidence" value="ECO:0007669"/>
    <property type="project" value="InterPro"/>
</dbReference>
<dbReference type="GO" id="GO:0000287">
    <property type="term" value="F:magnesium ion binding"/>
    <property type="evidence" value="ECO:0007669"/>
    <property type="project" value="UniProtKB-UniRule"/>
</dbReference>
<dbReference type="GO" id="GO:0004634">
    <property type="term" value="F:phosphopyruvate hydratase activity"/>
    <property type="evidence" value="ECO:0007669"/>
    <property type="project" value="UniProtKB-UniRule"/>
</dbReference>
<dbReference type="GO" id="GO:0006096">
    <property type="term" value="P:glycolytic process"/>
    <property type="evidence" value="ECO:0007669"/>
    <property type="project" value="UniProtKB-UniRule"/>
</dbReference>
<dbReference type="CDD" id="cd03313">
    <property type="entry name" value="enolase"/>
    <property type="match status" value="1"/>
</dbReference>
<dbReference type="FunFam" id="3.30.390.10:FF:000001">
    <property type="entry name" value="Enolase"/>
    <property type="match status" value="1"/>
</dbReference>
<dbReference type="Gene3D" id="3.20.20.120">
    <property type="entry name" value="Enolase-like C-terminal domain"/>
    <property type="match status" value="1"/>
</dbReference>
<dbReference type="Gene3D" id="3.30.390.10">
    <property type="entry name" value="Enolase-like, N-terminal domain"/>
    <property type="match status" value="1"/>
</dbReference>
<dbReference type="HAMAP" id="MF_00318">
    <property type="entry name" value="Enolase"/>
    <property type="match status" value="1"/>
</dbReference>
<dbReference type="InterPro" id="IPR000941">
    <property type="entry name" value="Enolase"/>
</dbReference>
<dbReference type="InterPro" id="IPR036849">
    <property type="entry name" value="Enolase-like_C_sf"/>
</dbReference>
<dbReference type="InterPro" id="IPR029017">
    <property type="entry name" value="Enolase-like_N"/>
</dbReference>
<dbReference type="InterPro" id="IPR020810">
    <property type="entry name" value="Enolase_C"/>
</dbReference>
<dbReference type="InterPro" id="IPR020809">
    <property type="entry name" value="Enolase_CS"/>
</dbReference>
<dbReference type="InterPro" id="IPR020811">
    <property type="entry name" value="Enolase_N"/>
</dbReference>
<dbReference type="NCBIfam" id="TIGR01060">
    <property type="entry name" value="eno"/>
    <property type="match status" value="1"/>
</dbReference>
<dbReference type="PANTHER" id="PTHR11902">
    <property type="entry name" value="ENOLASE"/>
    <property type="match status" value="1"/>
</dbReference>
<dbReference type="PANTHER" id="PTHR11902:SF1">
    <property type="entry name" value="ENOLASE"/>
    <property type="match status" value="1"/>
</dbReference>
<dbReference type="Pfam" id="PF00113">
    <property type="entry name" value="Enolase_C"/>
    <property type="match status" value="1"/>
</dbReference>
<dbReference type="Pfam" id="PF03952">
    <property type="entry name" value="Enolase_N"/>
    <property type="match status" value="1"/>
</dbReference>
<dbReference type="PIRSF" id="PIRSF001400">
    <property type="entry name" value="Enolase"/>
    <property type="match status" value="1"/>
</dbReference>
<dbReference type="PRINTS" id="PR00148">
    <property type="entry name" value="ENOLASE"/>
</dbReference>
<dbReference type="SFLD" id="SFLDF00002">
    <property type="entry name" value="enolase"/>
    <property type="match status" value="1"/>
</dbReference>
<dbReference type="SFLD" id="SFLDG00178">
    <property type="entry name" value="enolase"/>
    <property type="match status" value="1"/>
</dbReference>
<dbReference type="SMART" id="SM01192">
    <property type="entry name" value="Enolase_C"/>
    <property type="match status" value="1"/>
</dbReference>
<dbReference type="SMART" id="SM01193">
    <property type="entry name" value="Enolase_N"/>
    <property type="match status" value="1"/>
</dbReference>
<dbReference type="SUPFAM" id="SSF51604">
    <property type="entry name" value="Enolase C-terminal domain-like"/>
    <property type="match status" value="1"/>
</dbReference>
<dbReference type="SUPFAM" id="SSF54826">
    <property type="entry name" value="Enolase N-terminal domain-like"/>
    <property type="match status" value="1"/>
</dbReference>
<dbReference type="PROSITE" id="PS00164">
    <property type="entry name" value="ENOLASE"/>
    <property type="match status" value="1"/>
</dbReference>
<sequence>MLEVVISDIQAREILDSRGYPTLYVKVITNTGTFGEACVPSGASTGIKEALELRDQDTSRYQGKGVLQALKNVKEVLLPVLQGVSIFDQILIDSIMVEADGTPNKEKLGANAILGVSLAAAKAAAATLGRSFYRYVGGCFAHILPCPMMNLINGGMHANNGLQFQEFMIRPIGAHSLQEAVRMGADVFHTLKNLLNDKHLATGVGDEGGFAPQLKSNSEALDLLVLAIEKAGFQPGEEISLALDCAASSFYDTKTETYAGKNSQEQVGILADLCDRYPIDSIEDGLAEEDFDGWELLTAELGENIQIVGDDLFVTNPELIAEGISKGLANAVLIKPNQIGTLTETSEAIQLAHSQGYTTILSHRSGETEDTTIADLAVAFNTGQIKTGSLSRSERIAKYNRLMAIEEELGSEGLFKDSNPFSGE</sequence>